<evidence type="ECO:0000255" key="1">
    <source>
        <dbReference type="HAMAP-Rule" id="MF_00270"/>
    </source>
</evidence>
<evidence type="ECO:0000305" key="2"/>
<sequence length="85" mass="9901">MAQKINITNIPARRPFGRRRKVDPFTGQHAQEIDYKDVKMLQRYISEKGKIVPSRITAVNLKNQRKLAQAIKRARMLALIPFEVK</sequence>
<protein>
    <recommendedName>
        <fullName evidence="1">Small ribosomal subunit protein bS18</fullName>
    </recommendedName>
    <alternativeName>
        <fullName evidence="2">30S ribosomal protein S18</fullName>
    </alternativeName>
</protein>
<organism>
    <name type="scientific">Hyphomonas neptunium (strain ATCC 15444)</name>
    <dbReference type="NCBI Taxonomy" id="228405"/>
    <lineage>
        <taxon>Bacteria</taxon>
        <taxon>Pseudomonadati</taxon>
        <taxon>Pseudomonadota</taxon>
        <taxon>Alphaproteobacteria</taxon>
        <taxon>Hyphomonadales</taxon>
        <taxon>Hyphomonadaceae</taxon>
        <taxon>Hyphomonas</taxon>
    </lineage>
</organism>
<dbReference type="EMBL" id="CP000158">
    <property type="protein sequence ID" value="ABI76144.1"/>
    <property type="molecule type" value="Genomic_DNA"/>
</dbReference>
<dbReference type="RefSeq" id="WP_011647157.1">
    <property type="nucleotide sequence ID" value="NC_008358.1"/>
</dbReference>
<dbReference type="SMR" id="Q0C084"/>
<dbReference type="STRING" id="228405.HNE_2162"/>
<dbReference type="KEGG" id="hne:HNE_2162"/>
<dbReference type="eggNOG" id="COG0238">
    <property type="taxonomic scope" value="Bacteria"/>
</dbReference>
<dbReference type="HOGENOM" id="CLU_148710_0_3_5"/>
<dbReference type="Proteomes" id="UP000001959">
    <property type="component" value="Chromosome"/>
</dbReference>
<dbReference type="GO" id="GO:0022627">
    <property type="term" value="C:cytosolic small ribosomal subunit"/>
    <property type="evidence" value="ECO:0007669"/>
    <property type="project" value="TreeGrafter"/>
</dbReference>
<dbReference type="GO" id="GO:0070181">
    <property type="term" value="F:small ribosomal subunit rRNA binding"/>
    <property type="evidence" value="ECO:0007669"/>
    <property type="project" value="TreeGrafter"/>
</dbReference>
<dbReference type="GO" id="GO:0003735">
    <property type="term" value="F:structural constituent of ribosome"/>
    <property type="evidence" value="ECO:0007669"/>
    <property type="project" value="InterPro"/>
</dbReference>
<dbReference type="GO" id="GO:0006412">
    <property type="term" value="P:translation"/>
    <property type="evidence" value="ECO:0007669"/>
    <property type="project" value="UniProtKB-UniRule"/>
</dbReference>
<dbReference type="Gene3D" id="4.10.640.10">
    <property type="entry name" value="Ribosomal protein S18"/>
    <property type="match status" value="1"/>
</dbReference>
<dbReference type="HAMAP" id="MF_00270">
    <property type="entry name" value="Ribosomal_bS18"/>
    <property type="match status" value="1"/>
</dbReference>
<dbReference type="InterPro" id="IPR001648">
    <property type="entry name" value="Ribosomal_bS18"/>
</dbReference>
<dbReference type="InterPro" id="IPR018275">
    <property type="entry name" value="Ribosomal_bS18_CS"/>
</dbReference>
<dbReference type="InterPro" id="IPR036870">
    <property type="entry name" value="Ribosomal_bS18_sf"/>
</dbReference>
<dbReference type="NCBIfam" id="TIGR00165">
    <property type="entry name" value="S18"/>
    <property type="match status" value="1"/>
</dbReference>
<dbReference type="PANTHER" id="PTHR13479">
    <property type="entry name" value="30S RIBOSOMAL PROTEIN S18"/>
    <property type="match status" value="1"/>
</dbReference>
<dbReference type="PANTHER" id="PTHR13479:SF40">
    <property type="entry name" value="SMALL RIBOSOMAL SUBUNIT PROTEIN BS18M"/>
    <property type="match status" value="1"/>
</dbReference>
<dbReference type="Pfam" id="PF01084">
    <property type="entry name" value="Ribosomal_S18"/>
    <property type="match status" value="1"/>
</dbReference>
<dbReference type="PRINTS" id="PR00974">
    <property type="entry name" value="RIBOSOMALS18"/>
</dbReference>
<dbReference type="SUPFAM" id="SSF46911">
    <property type="entry name" value="Ribosomal protein S18"/>
    <property type="match status" value="1"/>
</dbReference>
<dbReference type="PROSITE" id="PS00057">
    <property type="entry name" value="RIBOSOMAL_S18"/>
    <property type="match status" value="1"/>
</dbReference>
<accession>Q0C084</accession>
<name>RS18_HYPNA</name>
<keyword id="KW-1185">Reference proteome</keyword>
<keyword id="KW-0687">Ribonucleoprotein</keyword>
<keyword id="KW-0689">Ribosomal protein</keyword>
<keyword id="KW-0694">RNA-binding</keyword>
<keyword id="KW-0699">rRNA-binding</keyword>
<feature type="chain" id="PRO_0000345486" description="Small ribosomal subunit protein bS18">
    <location>
        <begin position="1"/>
        <end position="85"/>
    </location>
</feature>
<reference key="1">
    <citation type="journal article" date="2006" name="J. Bacteriol.">
        <title>Comparative genomic evidence for a close relationship between the dimorphic prosthecate bacteria Hyphomonas neptunium and Caulobacter crescentus.</title>
        <authorList>
            <person name="Badger J.H."/>
            <person name="Hoover T.R."/>
            <person name="Brun Y.V."/>
            <person name="Weiner R.M."/>
            <person name="Laub M.T."/>
            <person name="Alexandre G."/>
            <person name="Mrazek J."/>
            <person name="Ren Q."/>
            <person name="Paulsen I.T."/>
            <person name="Nelson K.E."/>
            <person name="Khouri H.M."/>
            <person name="Radune D."/>
            <person name="Sosa J."/>
            <person name="Dodson R.J."/>
            <person name="Sullivan S.A."/>
            <person name="Rosovitz M.J."/>
            <person name="Madupu R."/>
            <person name="Brinkac L.M."/>
            <person name="Durkin A.S."/>
            <person name="Daugherty S.C."/>
            <person name="Kothari S.P."/>
            <person name="Giglio M.G."/>
            <person name="Zhou L."/>
            <person name="Haft D.H."/>
            <person name="Selengut J.D."/>
            <person name="Davidsen T.M."/>
            <person name="Yang Q."/>
            <person name="Zafar N."/>
            <person name="Ward N.L."/>
        </authorList>
    </citation>
    <scope>NUCLEOTIDE SEQUENCE [LARGE SCALE GENOMIC DNA]</scope>
    <source>
        <strain>ATCC 15444</strain>
    </source>
</reference>
<gene>
    <name evidence="1" type="primary">rpsR</name>
    <name type="ordered locus">HNE_2162</name>
</gene>
<comment type="function">
    <text evidence="1">Binds as a heterodimer with protein bS6 to the central domain of the 16S rRNA, where it helps stabilize the platform of the 30S subunit.</text>
</comment>
<comment type="subunit">
    <text evidence="1">Part of the 30S ribosomal subunit. Forms a tight heterodimer with protein bS6.</text>
</comment>
<comment type="similarity">
    <text evidence="1">Belongs to the bacterial ribosomal protein bS18 family.</text>
</comment>
<proteinExistence type="inferred from homology"/>